<evidence type="ECO:0000255" key="1">
    <source>
        <dbReference type="HAMAP-Rule" id="MF_00444"/>
    </source>
</evidence>
<reference key="1">
    <citation type="journal article" date="2006" name="BMC Evol. Biol.">
        <title>Complete plastid genome sequences of Drimys, Liriodendron, and Piper: implications for the phylogenetic relationships of magnoliids.</title>
        <authorList>
            <person name="Cai Z."/>
            <person name="Penaflor C."/>
            <person name="Kuehl J.V."/>
            <person name="Leebens-Mack J."/>
            <person name="Carlson J.E."/>
            <person name="dePamphilis C.W."/>
            <person name="Boore J.L."/>
            <person name="Jansen R.K."/>
        </authorList>
    </citation>
    <scope>NUCLEOTIDE SEQUENCE [LARGE SCALE GENOMIC DNA]</scope>
</reference>
<protein>
    <recommendedName>
        <fullName evidence="1">ATP-dependent Clp protease proteolytic subunit</fullName>
        <ecNumber evidence="1">3.4.21.92</ecNumber>
    </recommendedName>
    <alternativeName>
        <fullName evidence="1">Endopeptidase Clp</fullName>
    </alternativeName>
</protein>
<comment type="function">
    <text evidence="1">Cleaves peptides in various proteins in a process that requires ATP hydrolysis. Has a chymotrypsin-like activity. Plays a major role in the degradation of misfolded proteins.</text>
</comment>
<comment type="catalytic activity">
    <reaction evidence="1">
        <text>Hydrolysis of proteins to small peptides in the presence of ATP and magnesium. alpha-casein is the usual test substrate. In the absence of ATP, only oligopeptides shorter than five residues are hydrolyzed (such as succinyl-Leu-Tyr-|-NHMec, and Leu-Tyr-Leu-|-Tyr-Trp, in which cleavage of the -Tyr-|-Leu- and -Tyr-|-Trp bonds also occurs).</text>
        <dbReference type="EC" id="3.4.21.92"/>
    </reaction>
</comment>
<comment type="subunit">
    <text>Component of the chloroplastic Clp protease core complex.</text>
</comment>
<comment type="subcellular location">
    <subcellularLocation>
        <location evidence="1">Plastid</location>
        <location evidence="1">Chloroplast stroma</location>
    </subcellularLocation>
</comment>
<comment type="similarity">
    <text evidence="1">Belongs to the peptidase S14 family.</text>
</comment>
<accession>Q0G9J4</accession>
<organism>
    <name type="scientific">Liriodendron tulipifera</name>
    <name type="common">Tuliptree</name>
    <name type="synonym">Tulip poplar</name>
    <dbReference type="NCBI Taxonomy" id="3415"/>
    <lineage>
        <taxon>Eukaryota</taxon>
        <taxon>Viridiplantae</taxon>
        <taxon>Streptophyta</taxon>
        <taxon>Embryophyta</taxon>
        <taxon>Tracheophyta</taxon>
        <taxon>Spermatophyta</taxon>
        <taxon>Magnoliopsida</taxon>
        <taxon>Magnoliidae</taxon>
        <taxon>Magnoliales</taxon>
        <taxon>Magnoliaceae</taxon>
        <taxon>Liriodendron</taxon>
    </lineage>
</organism>
<keyword id="KW-0150">Chloroplast</keyword>
<keyword id="KW-0378">Hydrolase</keyword>
<keyword id="KW-0934">Plastid</keyword>
<keyword id="KW-0645">Protease</keyword>
<keyword id="KW-0720">Serine protease</keyword>
<feature type="chain" id="PRO_0000275290" description="ATP-dependent Clp protease proteolytic subunit">
    <location>
        <begin position="1"/>
        <end position="202"/>
    </location>
</feature>
<feature type="active site" description="Nucleophile" evidence="1">
    <location>
        <position position="101"/>
    </location>
</feature>
<feature type="active site" evidence="1">
    <location>
        <position position="126"/>
    </location>
</feature>
<gene>
    <name evidence="1" type="primary">clpP</name>
</gene>
<proteinExistence type="inferred from homology"/>
<sequence>MPIGVPKVPFRSPGEEDAIWVDVFNRLYRERLLFLGQEVDSEISNQLVGLMVYLSIEDDTRDLYLFINSPGGWVIPGISIYDTMQFVPPDVHTICMGLAASMGSFILVGGEITKRLAFPHARVMIHQPASSFYEAPTGEFILEAEELLKLRETLTRVYVQRTGNPLWVVSEDMERDVFMSAAEAQAHGIVDLVAVENTGDFA</sequence>
<dbReference type="EC" id="3.4.21.92" evidence="1"/>
<dbReference type="EMBL" id="DQ899947">
    <property type="protein sequence ID" value="ABI32534.1"/>
    <property type="molecule type" value="Genomic_DNA"/>
</dbReference>
<dbReference type="RefSeq" id="YP_740227.1">
    <property type="nucleotide sequence ID" value="NC_008326.1"/>
</dbReference>
<dbReference type="SMR" id="Q0G9J4"/>
<dbReference type="MEROPS" id="S14.002"/>
<dbReference type="GeneID" id="4266651"/>
<dbReference type="GO" id="GO:0009570">
    <property type="term" value="C:chloroplast stroma"/>
    <property type="evidence" value="ECO:0007669"/>
    <property type="project" value="UniProtKB-SubCell"/>
</dbReference>
<dbReference type="GO" id="GO:0009368">
    <property type="term" value="C:endopeptidase Clp complex"/>
    <property type="evidence" value="ECO:0007669"/>
    <property type="project" value="TreeGrafter"/>
</dbReference>
<dbReference type="GO" id="GO:0004176">
    <property type="term" value="F:ATP-dependent peptidase activity"/>
    <property type="evidence" value="ECO:0007669"/>
    <property type="project" value="InterPro"/>
</dbReference>
<dbReference type="GO" id="GO:0051117">
    <property type="term" value="F:ATPase binding"/>
    <property type="evidence" value="ECO:0007669"/>
    <property type="project" value="TreeGrafter"/>
</dbReference>
<dbReference type="GO" id="GO:0004252">
    <property type="term" value="F:serine-type endopeptidase activity"/>
    <property type="evidence" value="ECO:0007669"/>
    <property type="project" value="UniProtKB-UniRule"/>
</dbReference>
<dbReference type="GO" id="GO:0006515">
    <property type="term" value="P:protein quality control for misfolded or incompletely synthesized proteins"/>
    <property type="evidence" value="ECO:0007669"/>
    <property type="project" value="TreeGrafter"/>
</dbReference>
<dbReference type="CDD" id="cd07017">
    <property type="entry name" value="S14_ClpP_2"/>
    <property type="match status" value="1"/>
</dbReference>
<dbReference type="FunFam" id="3.90.226.10:FF:000006">
    <property type="entry name" value="ATP-dependent Clp protease proteolytic subunit"/>
    <property type="match status" value="1"/>
</dbReference>
<dbReference type="Gene3D" id="3.90.226.10">
    <property type="entry name" value="2-enoyl-CoA Hydratase, Chain A, domain 1"/>
    <property type="match status" value="1"/>
</dbReference>
<dbReference type="HAMAP" id="MF_00444">
    <property type="entry name" value="ClpP"/>
    <property type="match status" value="1"/>
</dbReference>
<dbReference type="InterPro" id="IPR001907">
    <property type="entry name" value="ClpP"/>
</dbReference>
<dbReference type="InterPro" id="IPR029045">
    <property type="entry name" value="ClpP/crotonase-like_dom_sf"/>
</dbReference>
<dbReference type="InterPro" id="IPR023562">
    <property type="entry name" value="ClpP/TepA"/>
</dbReference>
<dbReference type="InterPro" id="IPR033135">
    <property type="entry name" value="ClpP_His_AS"/>
</dbReference>
<dbReference type="InterPro" id="IPR018215">
    <property type="entry name" value="ClpP_Ser_AS"/>
</dbReference>
<dbReference type="PANTHER" id="PTHR10381">
    <property type="entry name" value="ATP-DEPENDENT CLP PROTEASE PROTEOLYTIC SUBUNIT"/>
    <property type="match status" value="1"/>
</dbReference>
<dbReference type="PANTHER" id="PTHR10381:SF15">
    <property type="entry name" value="CHLOROPLASTIC ATP-DEPENDENT CLP PROTEASE PROTEOLYTIC SUBUNIT 1"/>
    <property type="match status" value="1"/>
</dbReference>
<dbReference type="Pfam" id="PF00574">
    <property type="entry name" value="CLP_protease"/>
    <property type="match status" value="1"/>
</dbReference>
<dbReference type="PRINTS" id="PR00127">
    <property type="entry name" value="CLPPROTEASEP"/>
</dbReference>
<dbReference type="SUPFAM" id="SSF52096">
    <property type="entry name" value="ClpP/crotonase"/>
    <property type="match status" value="1"/>
</dbReference>
<dbReference type="PROSITE" id="PS00382">
    <property type="entry name" value="CLP_PROTEASE_HIS"/>
    <property type="match status" value="1"/>
</dbReference>
<dbReference type="PROSITE" id="PS00381">
    <property type="entry name" value="CLP_PROTEASE_SER"/>
    <property type="match status" value="1"/>
</dbReference>
<name>CLPP_LIRTU</name>
<geneLocation type="chloroplast"/>